<name>RL4_ALBFT</name>
<proteinExistence type="inferred from homology"/>
<keyword id="KW-1185">Reference proteome</keyword>
<keyword id="KW-0687">Ribonucleoprotein</keyword>
<keyword id="KW-0689">Ribosomal protein</keyword>
<keyword id="KW-0694">RNA-binding</keyword>
<keyword id="KW-0699">rRNA-binding</keyword>
<sequence>MQLELLNDQGLATAKYEAPETVFGRAYNEDLVHQIVVAFQANARQGTRAQKDREQVKHSTKKPFKQKGTGRARAGMTSSPLWRGGGRIFPNMPDENFTQKINKKMYRAGMASILSQLAREGRLAVVDSMKVDSPKTKPLAAKFKAMNLESVLVIADEVDENLYLASRNLVNVLVVEPRYADPVSLVHYRKVIVTKAAMEKLQEMFA</sequence>
<accession>Q21RV9</accession>
<gene>
    <name evidence="1" type="primary">rplD</name>
    <name type="ordered locus">Rfer_3794</name>
</gene>
<protein>
    <recommendedName>
        <fullName evidence="1">Large ribosomal subunit protein uL4</fullName>
    </recommendedName>
    <alternativeName>
        <fullName evidence="3">50S ribosomal protein L4</fullName>
    </alternativeName>
</protein>
<organism>
    <name type="scientific">Albidiferax ferrireducens (strain ATCC BAA-621 / DSM 15236 / T118)</name>
    <name type="common">Rhodoferax ferrireducens</name>
    <dbReference type="NCBI Taxonomy" id="338969"/>
    <lineage>
        <taxon>Bacteria</taxon>
        <taxon>Pseudomonadati</taxon>
        <taxon>Pseudomonadota</taxon>
        <taxon>Betaproteobacteria</taxon>
        <taxon>Burkholderiales</taxon>
        <taxon>Comamonadaceae</taxon>
        <taxon>Rhodoferax</taxon>
    </lineage>
</organism>
<feature type="chain" id="PRO_0000242425" description="Large ribosomal subunit protein uL4">
    <location>
        <begin position="1"/>
        <end position="206"/>
    </location>
</feature>
<feature type="region of interest" description="Disordered" evidence="2">
    <location>
        <begin position="46"/>
        <end position="77"/>
    </location>
</feature>
<feature type="compositionally biased region" description="Basic residues" evidence="2">
    <location>
        <begin position="58"/>
        <end position="70"/>
    </location>
</feature>
<dbReference type="EMBL" id="CP000267">
    <property type="protein sequence ID" value="ABD71494.1"/>
    <property type="molecule type" value="Genomic_DNA"/>
</dbReference>
<dbReference type="RefSeq" id="WP_011466057.1">
    <property type="nucleotide sequence ID" value="NC_007908.1"/>
</dbReference>
<dbReference type="SMR" id="Q21RV9"/>
<dbReference type="STRING" id="338969.Rfer_3794"/>
<dbReference type="KEGG" id="rfr:Rfer_3794"/>
<dbReference type="eggNOG" id="COG0088">
    <property type="taxonomic scope" value="Bacteria"/>
</dbReference>
<dbReference type="HOGENOM" id="CLU_041575_5_2_4"/>
<dbReference type="OrthoDB" id="9803201at2"/>
<dbReference type="Proteomes" id="UP000008332">
    <property type="component" value="Chromosome"/>
</dbReference>
<dbReference type="GO" id="GO:1990904">
    <property type="term" value="C:ribonucleoprotein complex"/>
    <property type="evidence" value="ECO:0007669"/>
    <property type="project" value="UniProtKB-KW"/>
</dbReference>
<dbReference type="GO" id="GO:0005840">
    <property type="term" value="C:ribosome"/>
    <property type="evidence" value="ECO:0007669"/>
    <property type="project" value="UniProtKB-KW"/>
</dbReference>
<dbReference type="GO" id="GO:0019843">
    <property type="term" value="F:rRNA binding"/>
    <property type="evidence" value="ECO:0007669"/>
    <property type="project" value="UniProtKB-UniRule"/>
</dbReference>
<dbReference type="GO" id="GO:0003735">
    <property type="term" value="F:structural constituent of ribosome"/>
    <property type="evidence" value="ECO:0007669"/>
    <property type="project" value="InterPro"/>
</dbReference>
<dbReference type="GO" id="GO:0006412">
    <property type="term" value="P:translation"/>
    <property type="evidence" value="ECO:0007669"/>
    <property type="project" value="UniProtKB-UniRule"/>
</dbReference>
<dbReference type="Gene3D" id="3.40.1370.10">
    <property type="match status" value="1"/>
</dbReference>
<dbReference type="HAMAP" id="MF_01328_B">
    <property type="entry name" value="Ribosomal_uL4_B"/>
    <property type="match status" value="1"/>
</dbReference>
<dbReference type="InterPro" id="IPR002136">
    <property type="entry name" value="Ribosomal_uL4"/>
</dbReference>
<dbReference type="InterPro" id="IPR013005">
    <property type="entry name" value="Ribosomal_uL4-like"/>
</dbReference>
<dbReference type="InterPro" id="IPR023574">
    <property type="entry name" value="Ribosomal_uL4_dom_sf"/>
</dbReference>
<dbReference type="NCBIfam" id="TIGR03953">
    <property type="entry name" value="rplD_bact"/>
    <property type="match status" value="1"/>
</dbReference>
<dbReference type="PANTHER" id="PTHR10746">
    <property type="entry name" value="50S RIBOSOMAL PROTEIN L4"/>
    <property type="match status" value="1"/>
</dbReference>
<dbReference type="PANTHER" id="PTHR10746:SF6">
    <property type="entry name" value="LARGE RIBOSOMAL SUBUNIT PROTEIN UL4M"/>
    <property type="match status" value="1"/>
</dbReference>
<dbReference type="Pfam" id="PF00573">
    <property type="entry name" value="Ribosomal_L4"/>
    <property type="match status" value="1"/>
</dbReference>
<dbReference type="SUPFAM" id="SSF52166">
    <property type="entry name" value="Ribosomal protein L4"/>
    <property type="match status" value="1"/>
</dbReference>
<comment type="function">
    <text evidence="1">One of the primary rRNA binding proteins, this protein initially binds near the 5'-end of the 23S rRNA. It is important during the early stages of 50S assembly. It makes multiple contacts with different domains of the 23S rRNA in the assembled 50S subunit and ribosome.</text>
</comment>
<comment type="function">
    <text evidence="1">Forms part of the polypeptide exit tunnel.</text>
</comment>
<comment type="subunit">
    <text evidence="1">Part of the 50S ribosomal subunit.</text>
</comment>
<comment type="similarity">
    <text evidence="1">Belongs to the universal ribosomal protein uL4 family.</text>
</comment>
<evidence type="ECO:0000255" key="1">
    <source>
        <dbReference type="HAMAP-Rule" id="MF_01328"/>
    </source>
</evidence>
<evidence type="ECO:0000256" key="2">
    <source>
        <dbReference type="SAM" id="MobiDB-lite"/>
    </source>
</evidence>
<evidence type="ECO:0000305" key="3"/>
<reference key="1">
    <citation type="submission" date="2006-02" db="EMBL/GenBank/DDBJ databases">
        <title>Complete sequence of chromosome of Rhodoferax ferrireducens DSM 15236.</title>
        <authorList>
            <person name="Copeland A."/>
            <person name="Lucas S."/>
            <person name="Lapidus A."/>
            <person name="Barry K."/>
            <person name="Detter J.C."/>
            <person name="Glavina del Rio T."/>
            <person name="Hammon N."/>
            <person name="Israni S."/>
            <person name="Pitluck S."/>
            <person name="Brettin T."/>
            <person name="Bruce D."/>
            <person name="Han C."/>
            <person name="Tapia R."/>
            <person name="Gilna P."/>
            <person name="Kiss H."/>
            <person name="Schmutz J."/>
            <person name="Larimer F."/>
            <person name="Land M."/>
            <person name="Kyrpides N."/>
            <person name="Ivanova N."/>
            <person name="Richardson P."/>
        </authorList>
    </citation>
    <scope>NUCLEOTIDE SEQUENCE [LARGE SCALE GENOMIC DNA]</scope>
    <source>
        <strain>ATCC BAA-621 / DSM 15236 / T118</strain>
    </source>
</reference>